<comment type="function">
    <text evidence="4 5">Activator protein that regulates the ubiquitin ligase activity and substrate specificity of the anaphase promoting complex/cyclosome (APC/C). Required for the ubiquitination and subsequent degradation of the B-type cyclin CLB1 by the APC/C complex during meiosis. Required for meiosis I, late meiotic gene expression and spore wall assembly.</text>
</comment>
<comment type="subunit">
    <text evidence="4">Interacts with CDC16.</text>
</comment>
<comment type="developmental stage">
    <text evidence="3 5">Expressed and spliced only during meiosis dependent on the splicing factor MER1.</text>
</comment>
<comment type="domain">
    <text evidence="1">The C-box is required for the association with the APC/C complex.</text>
</comment>
<comment type="similarity">
    <text evidence="6">Belongs to the WD repeat CDC20/Fizzy family.</text>
</comment>
<comment type="sequence caution" evidence="6">
    <conflict type="erroneous gene model prediction">
        <sequence resource="EMBL-CDS" id="CAA61174"/>
    </conflict>
</comment>
<comment type="sequence caution" evidence="6">
    <conflict type="frameshift">
        <sequence resource="EMBL-CDS" id="CAA61174"/>
    </conflict>
</comment>
<comment type="sequence caution" evidence="6">
    <conflict type="erroneous gene model prediction">
        <sequence resource="EMBL-CDS" id="CAA97253"/>
    </conflict>
</comment>
<gene>
    <name type="primary">AMA1</name>
    <name type="synonym">SPO70</name>
    <name type="ordered locus">YGR225W</name>
    <name type="ORF">G8541</name>
</gene>
<feature type="chain" id="PRO_0000050842" description="Meiosis-specific APC/C activator protein AMA1">
    <location>
        <begin position="1"/>
        <end position="593"/>
    </location>
</feature>
<feature type="repeat" description="WD 1">
    <location>
        <begin position="226"/>
        <end position="264"/>
    </location>
</feature>
<feature type="repeat" description="WD 2">
    <location>
        <begin position="271"/>
        <end position="310"/>
    </location>
</feature>
<feature type="repeat" description="WD 3">
    <location>
        <begin position="323"/>
        <end position="364"/>
    </location>
</feature>
<feature type="repeat" description="WD 4">
    <location>
        <begin position="388"/>
        <end position="427"/>
    </location>
</feature>
<feature type="repeat" description="WD 5">
    <location>
        <begin position="432"/>
        <end position="474"/>
    </location>
</feature>
<feature type="repeat" description="WD 6">
    <location>
        <begin position="525"/>
        <end position="564"/>
    </location>
</feature>
<feature type="region of interest" description="Disordered" evidence="2">
    <location>
        <begin position="1"/>
        <end position="26"/>
    </location>
</feature>
<feature type="region of interest" description="Disordered" evidence="2">
    <location>
        <begin position="94"/>
        <end position="125"/>
    </location>
</feature>
<feature type="short sequence motif" description="C-box" evidence="1">
    <location>
        <begin position="29"/>
        <end position="35"/>
    </location>
</feature>
<feature type="compositionally biased region" description="Basic residues" evidence="2">
    <location>
        <begin position="1"/>
        <end position="11"/>
    </location>
</feature>
<feature type="compositionally biased region" description="Low complexity" evidence="2">
    <location>
        <begin position="12"/>
        <end position="25"/>
    </location>
</feature>
<feature type="compositionally biased region" description="Low complexity" evidence="2">
    <location>
        <begin position="94"/>
        <end position="109"/>
    </location>
</feature>
<feature type="compositionally biased region" description="Basic and acidic residues" evidence="2">
    <location>
        <begin position="113"/>
        <end position="125"/>
    </location>
</feature>
<proteinExistence type="evidence at protein level"/>
<organism>
    <name type="scientific">Saccharomyces cerevisiae (strain ATCC 204508 / S288c)</name>
    <name type="common">Baker's yeast</name>
    <dbReference type="NCBI Taxonomy" id="559292"/>
    <lineage>
        <taxon>Eukaryota</taxon>
        <taxon>Fungi</taxon>
        <taxon>Dikarya</taxon>
        <taxon>Ascomycota</taxon>
        <taxon>Saccharomycotina</taxon>
        <taxon>Saccharomycetes</taxon>
        <taxon>Saccharomycetales</taxon>
        <taxon>Saccharomycetaceae</taxon>
        <taxon>Saccharomyces</taxon>
    </lineage>
</organism>
<sequence>MATPHLYHRYNSKSSNKNINSSGNSTEVDRFIPKSVSRNAYKSIPMLNGFDISYSELCEKSPSPERLSSPEFFNELRNTGHYESISTTNEFSMSSISSSSESQVTRSGSARASRNDYSKLTKEQKDHRKNIAHSLGFQLPDRVFTFETTSAEILEKNKAIKNCFGPGSCAEIRSTFDFSTLSPDVARYYIANSNARSASPQRQIQRPAKRVKSHIPYRVLDAPCLRNDFYSNLISWSRTTNNVLVGLGCSVYIWSEKEGAVSILDHQYLSEKRDLVTCVSFCPYNTYFIVGTKFGRILLYDQKEFFHSSNTNEKEPVFVFQTESFKGICCLEWFKPGEICKFYVGEENGNVSLFEIKSLHFPIKNWSKRQKLEDENLIGLKLHSTYQAQAQQVCGISLNEHANLLAVGGNDNSCSLWDISDLDKPIKKFVLPHKAAVKAIAFCPWSKSLLATGGGSKDRCIKFWHTSTGTLLDEICTSGQVTSLIWSLRHKQIVATFGFGDTKNPVLITLYSYPKLSKLLEVRSPNPLRVLSAVISPSSMAICVATNDETIRFYELWNDKEEIINEIQESGIYGSNIIEYMEGIETTHNKRIR</sequence>
<dbReference type="EMBL" id="AY033394">
    <property type="protein sequence ID" value="AAK61800.1"/>
    <property type="molecule type" value="Genomic_DNA"/>
</dbReference>
<dbReference type="EMBL" id="X87941">
    <property type="protein sequence ID" value="CAA61174.1"/>
    <property type="status" value="ALT_SEQ"/>
    <property type="molecule type" value="Genomic_DNA"/>
</dbReference>
<dbReference type="EMBL" id="Z73010">
    <property type="protein sequence ID" value="CAA97253.1"/>
    <property type="status" value="ALT_SEQ"/>
    <property type="molecule type" value="Genomic_DNA"/>
</dbReference>
<dbReference type="EMBL" id="BK006941">
    <property type="protein sequence ID" value="DAA08318.1"/>
    <property type="molecule type" value="Genomic_DNA"/>
</dbReference>
<dbReference type="PIR" id="S57689">
    <property type="entry name" value="S57689"/>
</dbReference>
<dbReference type="RefSeq" id="NP_011741.5">
    <property type="nucleotide sequence ID" value="NM_001181354.3"/>
</dbReference>
<dbReference type="SMR" id="P50082"/>
<dbReference type="BioGRID" id="33478">
    <property type="interactions" value="83"/>
</dbReference>
<dbReference type="ComplexPortal" id="CPX-762">
    <property type="entry name" value="Anaphase-Promoting complex AMA1 variant"/>
</dbReference>
<dbReference type="DIP" id="DIP-7218N"/>
<dbReference type="ELM" id="P50082"/>
<dbReference type="FunCoup" id="P50082">
    <property type="interactions" value="324"/>
</dbReference>
<dbReference type="IntAct" id="P50082">
    <property type="interactions" value="3"/>
</dbReference>
<dbReference type="MINT" id="P50082"/>
<dbReference type="STRING" id="4932.YGR225W"/>
<dbReference type="PaxDb" id="4932-YGR225W"/>
<dbReference type="PeptideAtlas" id="P50082"/>
<dbReference type="EnsemblFungi" id="YGR225W_mRNA">
    <property type="protein sequence ID" value="YGR225W"/>
    <property type="gene ID" value="YGR225W"/>
</dbReference>
<dbReference type="GeneID" id="853140"/>
<dbReference type="KEGG" id="sce:YGR225W"/>
<dbReference type="AGR" id="SGD:S000003457"/>
<dbReference type="SGD" id="S000003457">
    <property type="gene designation" value="AMA1"/>
</dbReference>
<dbReference type="VEuPathDB" id="FungiDB:YGR225W"/>
<dbReference type="eggNOG" id="KOG0305">
    <property type="taxonomic scope" value="Eukaryota"/>
</dbReference>
<dbReference type="GeneTree" id="ENSGT00950000183104"/>
<dbReference type="HOGENOM" id="CLU_014831_3_3_1"/>
<dbReference type="InParanoid" id="P50082"/>
<dbReference type="OMA" id="FCPWSRS"/>
<dbReference type="OrthoDB" id="10263272at2759"/>
<dbReference type="BioCyc" id="YEAST:G3O-30906-MONOMER"/>
<dbReference type="BioGRID-ORCS" id="853140">
    <property type="hits" value="0 hits in 10 CRISPR screens"/>
</dbReference>
<dbReference type="PRO" id="PR:P50082"/>
<dbReference type="Proteomes" id="UP000002311">
    <property type="component" value="Chromosome VII"/>
</dbReference>
<dbReference type="RNAct" id="P50082">
    <property type="molecule type" value="protein"/>
</dbReference>
<dbReference type="GO" id="GO:0005680">
    <property type="term" value="C:anaphase-promoting complex"/>
    <property type="evidence" value="ECO:0000353"/>
    <property type="project" value="SGD"/>
</dbReference>
<dbReference type="GO" id="GO:0010997">
    <property type="term" value="F:anaphase-promoting complex binding"/>
    <property type="evidence" value="ECO:0000318"/>
    <property type="project" value="GO_Central"/>
</dbReference>
<dbReference type="GO" id="GO:1990757">
    <property type="term" value="F:ubiquitin ligase activator activity"/>
    <property type="evidence" value="ECO:0000314"/>
    <property type="project" value="SGD"/>
</dbReference>
<dbReference type="GO" id="GO:0031145">
    <property type="term" value="P:anaphase-promoting complex-dependent catabolic process"/>
    <property type="evidence" value="ECO:0000318"/>
    <property type="project" value="GO_Central"/>
</dbReference>
<dbReference type="GO" id="GO:0030437">
    <property type="term" value="P:ascospore formation"/>
    <property type="evidence" value="ECO:0000315"/>
    <property type="project" value="SGD"/>
</dbReference>
<dbReference type="GO" id="GO:0030476">
    <property type="term" value="P:ascospore wall assembly"/>
    <property type="evidence" value="ECO:0000315"/>
    <property type="project" value="SGD"/>
</dbReference>
<dbReference type="GO" id="GO:0051301">
    <property type="term" value="P:cell division"/>
    <property type="evidence" value="ECO:0007669"/>
    <property type="project" value="UniProtKB-KW"/>
</dbReference>
<dbReference type="GO" id="GO:0007127">
    <property type="term" value="P:meiosis I"/>
    <property type="evidence" value="ECO:0000315"/>
    <property type="project" value="SGD"/>
</dbReference>
<dbReference type="GO" id="GO:0051321">
    <property type="term" value="P:meiotic cell cycle"/>
    <property type="evidence" value="ECO:0000315"/>
    <property type="project" value="SGD"/>
</dbReference>
<dbReference type="GO" id="GO:0045132">
    <property type="term" value="P:meiotic chromosome segregation"/>
    <property type="evidence" value="ECO:0000315"/>
    <property type="project" value="SGD"/>
</dbReference>
<dbReference type="GO" id="GO:0044778">
    <property type="term" value="P:meiotic DNA integrity checkpoint signaling"/>
    <property type="evidence" value="ECO:0000315"/>
    <property type="project" value="SGD"/>
</dbReference>
<dbReference type="GO" id="GO:1905786">
    <property type="term" value="P:positive regulation of anaphase-promoting complex-dependent catabolic process"/>
    <property type="evidence" value="ECO:0000315"/>
    <property type="project" value="SGD"/>
</dbReference>
<dbReference type="GO" id="GO:1903024">
    <property type="term" value="P:positive regulation of ascospore-type prospore membrane formation"/>
    <property type="evidence" value="ECO:0000316"/>
    <property type="project" value="SGD"/>
</dbReference>
<dbReference type="GO" id="GO:0045732">
    <property type="term" value="P:positive regulation of protein catabolic process"/>
    <property type="evidence" value="ECO:0000315"/>
    <property type="project" value="SGD"/>
</dbReference>
<dbReference type="GO" id="GO:0016567">
    <property type="term" value="P:protein ubiquitination"/>
    <property type="evidence" value="ECO:0000303"/>
    <property type="project" value="ComplexPortal"/>
</dbReference>
<dbReference type="GO" id="GO:0051445">
    <property type="term" value="P:regulation of meiotic cell cycle"/>
    <property type="evidence" value="ECO:0000303"/>
    <property type="project" value="ComplexPortal"/>
</dbReference>
<dbReference type="GO" id="GO:0007130">
    <property type="term" value="P:synaptonemal complex assembly"/>
    <property type="evidence" value="ECO:0000315"/>
    <property type="project" value="SGD"/>
</dbReference>
<dbReference type="Gene3D" id="2.130.10.10">
    <property type="entry name" value="YVTN repeat-like/Quinoprotein amine dehydrogenase"/>
    <property type="match status" value="1"/>
</dbReference>
<dbReference type="InterPro" id="IPR033010">
    <property type="entry name" value="Cdc20/Fizzy"/>
</dbReference>
<dbReference type="InterPro" id="IPR015943">
    <property type="entry name" value="WD40/YVTN_repeat-like_dom_sf"/>
</dbReference>
<dbReference type="InterPro" id="IPR056150">
    <property type="entry name" value="WD40_CDC20-Fz"/>
</dbReference>
<dbReference type="InterPro" id="IPR036322">
    <property type="entry name" value="WD40_repeat_dom_sf"/>
</dbReference>
<dbReference type="InterPro" id="IPR001680">
    <property type="entry name" value="WD40_rpt"/>
</dbReference>
<dbReference type="PANTHER" id="PTHR19918">
    <property type="entry name" value="CELL DIVISION CYCLE 20 CDC20 FIZZY -RELATED"/>
    <property type="match status" value="1"/>
</dbReference>
<dbReference type="PANTHER" id="PTHR19918:SF5">
    <property type="entry name" value="MEIOSIS-SPECIFIC APC_C ACTIVATOR PROTEIN AMA1"/>
    <property type="match status" value="1"/>
</dbReference>
<dbReference type="Pfam" id="PF24807">
    <property type="entry name" value="WD40_CDC20-Fz"/>
    <property type="match status" value="1"/>
</dbReference>
<dbReference type="SMART" id="SM00320">
    <property type="entry name" value="WD40"/>
    <property type="match status" value="5"/>
</dbReference>
<dbReference type="SUPFAM" id="SSF50978">
    <property type="entry name" value="WD40 repeat-like"/>
    <property type="match status" value="1"/>
</dbReference>
<dbReference type="PROSITE" id="PS50082">
    <property type="entry name" value="WD_REPEATS_2"/>
    <property type="match status" value="1"/>
</dbReference>
<dbReference type="PROSITE" id="PS50294">
    <property type="entry name" value="WD_REPEATS_REGION"/>
    <property type="match status" value="1"/>
</dbReference>
<protein>
    <recommendedName>
        <fullName>Meiosis-specific APC/C activator protein AMA1</fullName>
    </recommendedName>
    <alternativeName>
        <fullName>Activator of meiotic APC/C protein 1</fullName>
    </alternativeName>
    <alternativeName>
        <fullName>Sporulation-specific protein 70</fullName>
    </alternativeName>
</protein>
<reference key="1">
    <citation type="journal article" date="2000" name="Proc. Natl. Acad. Sci. U.S.A.">
        <title>Ama1p is a meiosis-specific regulator of the anaphase promoting complex/cyclosome in yeast.</title>
        <authorList>
            <person name="Cooper K.F."/>
            <person name="Mallory M.J."/>
            <person name="Egeland D.B."/>
            <person name="Jarnik M."/>
            <person name="Strich R."/>
        </authorList>
    </citation>
    <scope>NUCLEOTIDE SEQUENCE [GENOMIC DNA]</scope>
    <scope>FUNCTION</scope>
    <scope>INTERACTION WITH CDC16</scope>
</reference>
<reference key="2">
    <citation type="journal article" date="1996" name="Yeast">
        <title>Sequence analysis of the 43 kb CRM1-YLM9-PET54-DIE2-SMI1-PHO81-YHB4-PFK1 region from the right arm of Saccharomyces cerevisiae chromosome VII.</title>
        <authorList>
            <person name="van der Aart Q.J.M."/>
            <person name="Kleine K."/>
            <person name="Steensma H.Y."/>
        </authorList>
    </citation>
    <scope>NUCLEOTIDE SEQUENCE [GENOMIC DNA]</scope>
    <source>
        <strain>ATCC 204508 / S288c</strain>
    </source>
</reference>
<reference key="3">
    <citation type="journal article" date="1997" name="Nature">
        <title>The nucleotide sequence of Saccharomyces cerevisiae chromosome VII.</title>
        <authorList>
            <person name="Tettelin H."/>
            <person name="Agostoni-Carbone M.L."/>
            <person name="Albermann K."/>
            <person name="Albers M."/>
            <person name="Arroyo J."/>
            <person name="Backes U."/>
            <person name="Barreiros T."/>
            <person name="Bertani I."/>
            <person name="Bjourson A.J."/>
            <person name="Brueckner M."/>
            <person name="Bruschi C.V."/>
            <person name="Carignani G."/>
            <person name="Castagnoli L."/>
            <person name="Cerdan E."/>
            <person name="Clemente M.L."/>
            <person name="Coblenz A."/>
            <person name="Coglievina M."/>
            <person name="Coissac E."/>
            <person name="Defoor E."/>
            <person name="Del Bino S."/>
            <person name="Delius H."/>
            <person name="Delneri D."/>
            <person name="de Wergifosse P."/>
            <person name="Dujon B."/>
            <person name="Durand P."/>
            <person name="Entian K.-D."/>
            <person name="Eraso P."/>
            <person name="Escribano V."/>
            <person name="Fabiani L."/>
            <person name="Fartmann B."/>
            <person name="Feroli F."/>
            <person name="Feuermann M."/>
            <person name="Frontali L."/>
            <person name="Garcia-Gonzalez M."/>
            <person name="Garcia-Saez M.I."/>
            <person name="Goffeau A."/>
            <person name="Guerreiro P."/>
            <person name="Hani J."/>
            <person name="Hansen M."/>
            <person name="Hebling U."/>
            <person name="Hernandez K."/>
            <person name="Heumann K."/>
            <person name="Hilger F."/>
            <person name="Hofmann B."/>
            <person name="Indge K.J."/>
            <person name="James C.M."/>
            <person name="Klima R."/>
            <person name="Koetter P."/>
            <person name="Kramer B."/>
            <person name="Kramer W."/>
            <person name="Lauquin G."/>
            <person name="Leuther H."/>
            <person name="Louis E.J."/>
            <person name="Maillier E."/>
            <person name="Marconi A."/>
            <person name="Martegani E."/>
            <person name="Mazon M.J."/>
            <person name="Mazzoni C."/>
            <person name="McReynolds A.D.K."/>
            <person name="Melchioretto P."/>
            <person name="Mewes H.-W."/>
            <person name="Minenkova O."/>
            <person name="Mueller-Auer S."/>
            <person name="Nawrocki A."/>
            <person name="Netter P."/>
            <person name="Neu R."/>
            <person name="Nombela C."/>
            <person name="Oliver S.G."/>
            <person name="Panzeri L."/>
            <person name="Paoluzi S."/>
            <person name="Plevani P."/>
            <person name="Portetelle D."/>
            <person name="Portillo F."/>
            <person name="Potier S."/>
            <person name="Purnelle B."/>
            <person name="Rieger M."/>
            <person name="Riles L."/>
            <person name="Rinaldi T."/>
            <person name="Robben J."/>
            <person name="Rodrigues-Pousada C."/>
            <person name="Rodriguez-Belmonte E."/>
            <person name="Rodriguez-Torres A.M."/>
            <person name="Rose M."/>
            <person name="Ruzzi M."/>
            <person name="Saliola M."/>
            <person name="Sanchez-Perez M."/>
            <person name="Schaefer B."/>
            <person name="Schaefer M."/>
            <person name="Scharfe M."/>
            <person name="Schmidheini T."/>
            <person name="Schreer A."/>
            <person name="Skala J."/>
            <person name="Souciet J.-L."/>
            <person name="Steensma H.Y."/>
            <person name="Talla E."/>
            <person name="Thierry A."/>
            <person name="Vandenbol M."/>
            <person name="van der Aart Q.J.M."/>
            <person name="Van Dyck L."/>
            <person name="Vanoni M."/>
            <person name="Verhasselt P."/>
            <person name="Voet M."/>
            <person name="Volckaert G."/>
            <person name="Wambutt R."/>
            <person name="Watson M.D."/>
            <person name="Weber N."/>
            <person name="Wedler E."/>
            <person name="Wedler H."/>
            <person name="Wipfli P."/>
            <person name="Wolf K."/>
            <person name="Wright L.F."/>
            <person name="Zaccaria P."/>
            <person name="Zimmermann M."/>
            <person name="Zollner A."/>
            <person name="Kleine K."/>
        </authorList>
    </citation>
    <scope>NUCLEOTIDE SEQUENCE [LARGE SCALE GENOMIC DNA]</scope>
    <source>
        <strain>ATCC 204508 / S288c</strain>
    </source>
</reference>
<reference key="4">
    <citation type="journal article" date="2014" name="G3 (Bethesda)">
        <title>The reference genome sequence of Saccharomyces cerevisiae: Then and now.</title>
        <authorList>
            <person name="Engel S.R."/>
            <person name="Dietrich F.S."/>
            <person name="Fisk D.G."/>
            <person name="Binkley G."/>
            <person name="Balakrishnan R."/>
            <person name="Costanzo M.C."/>
            <person name="Dwight S.S."/>
            <person name="Hitz B.C."/>
            <person name="Karra K."/>
            <person name="Nash R.S."/>
            <person name="Weng S."/>
            <person name="Wong E.D."/>
            <person name="Lloyd P."/>
            <person name="Skrzypek M.S."/>
            <person name="Miyasato S.R."/>
            <person name="Simison M."/>
            <person name="Cherry J.M."/>
        </authorList>
    </citation>
    <scope>GENOME REANNOTATION</scope>
    <source>
        <strain>ATCC 204508 / S288c</strain>
    </source>
</reference>
<reference key="5">
    <citation type="journal article" date="1998" name="Science">
        <title>The transcriptional program of sporulation in budding yeast.</title>
        <authorList>
            <person name="Chu S."/>
            <person name="DeRisi J."/>
            <person name="Eisen M."/>
            <person name="Mulholland J."/>
            <person name="Botstein D."/>
            <person name="Brown P.O."/>
            <person name="Herskowitz I."/>
        </authorList>
    </citation>
    <scope>FUNCTION</scope>
    <scope>DEVELOPMENTAL STAGE</scope>
</reference>
<reference key="6">
    <citation type="journal article" date="2000" name="Nucleic Acids Res.">
        <title>Test of intron predictions reveals novel splice sites, alternatively spliced mRNAs and new introns in meiotically regulated genes of yeast.</title>
        <authorList>
            <person name="Davis C.A."/>
            <person name="Grate L."/>
            <person name="Spingola M."/>
            <person name="Ares M. Jr."/>
        </authorList>
    </citation>
    <scope>DEVELOPMENTAL STAGE</scope>
</reference>
<name>AMA1_YEAST</name>
<keyword id="KW-0131">Cell cycle</keyword>
<keyword id="KW-0132">Cell division</keyword>
<keyword id="KW-0469">Meiosis</keyword>
<keyword id="KW-1185">Reference proteome</keyword>
<keyword id="KW-0677">Repeat</keyword>
<keyword id="KW-0853">WD repeat</keyword>
<accession>P50082</accession>
<accession>D6VV07</accession>
<accession>Q96VQ3</accession>
<evidence type="ECO:0000250" key="1"/>
<evidence type="ECO:0000256" key="2">
    <source>
        <dbReference type="SAM" id="MobiDB-lite"/>
    </source>
</evidence>
<evidence type="ECO:0000269" key="3">
    <source>
    </source>
</evidence>
<evidence type="ECO:0000269" key="4">
    <source>
    </source>
</evidence>
<evidence type="ECO:0000269" key="5">
    <source>
    </source>
</evidence>
<evidence type="ECO:0000305" key="6"/>